<geneLocation type="chloroplast"/>
<dbReference type="EMBL" id="AB240139">
    <property type="protein sequence ID" value="BAE48082.1"/>
    <property type="molecule type" value="Genomic_DNA"/>
</dbReference>
<dbReference type="EMBL" id="AB240139">
    <property type="protein sequence ID" value="BAE48047.1"/>
    <property type="molecule type" value="Genomic_DNA"/>
</dbReference>
<dbReference type="KEGG" id="nto:3776317"/>
<dbReference type="KEGG" id="nto:3776318"/>
<dbReference type="OrthoDB" id="1669967at2759"/>
<dbReference type="GO" id="GO:0009570">
    <property type="term" value="C:chloroplast stroma"/>
    <property type="evidence" value="ECO:0007669"/>
    <property type="project" value="UniProtKB-SubCell"/>
</dbReference>
<dbReference type="GO" id="GO:0005524">
    <property type="term" value="F:ATP binding"/>
    <property type="evidence" value="ECO:0007669"/>
    <property type="project" value="UniProtKB-KW"/>
</dbReference>
<dbReference type="GO" id="GO:0016887">
    <property type="term" value="F:ATP hydrolysis activity"/>
    <property type="evidence" value="ECO:0007669"/>
    <property type="project" value="InterPro"/>
</dbReference>
<dbReference type="CDD" id="cd19505">
    <property type="entry name" value="RecA-like_Ycf2"/>
    <property type="match status" value="1"/>
</dbReference>
<dbReference type="Gene3D" id="3.40.50.300">
    <property type="entry name" value="P-loop containing nucleotide triphosphate hydrolases"/>
    <property type="match status" value="1"/>
</dbReference>
<dbReference type="HAMAP" id="MF_01330">
    <property type="entry name" value="Ycf2"/>
    <property type="match status" value="1"/>
</dbReference>
<dbReference type="InterPro" id="IPR003593">
    <property type="entry name" value="AAA+_ATPase"/>
</dbReference>
<dbReference type="InterPro" id="IPR003959">
    <property type="entry name" value="ATPase_AAA_core"/>
</dbReference>
<dbReference type="InterPro" id="IPR027417">
    <property type="entry name" value="P-loop_NTPase"/>
</dbReference>
<dbReference type="InterPro" id="IPR008543">
    <property type="entry name" value="Uncharacterised_Ycf2"/>
</dbReference>
<dbReference type="InterPro" id="IPR056777">
    <property type="entry name" value="Ycf2_N"/>
</dbReference>
<dbReference type="PANTHER" id="PTHR33078:SF51">
    <property type="entry name" value="PROTEIN TIC 214"/>
    <property type="match status" value="1"/>
</dbReference>
<dbReference type="PANTHER" id="PTHR33078">
    <property type="entry name" value="PROTEIN YCF2-RELATED"/>
    <property type="match status" value="1"/>
</dbReference>
<dbReference type="Pfam" id="PF00004">
    <property type="entry name" value="AAA"/>
    <property type="match status" value="1"/>
</dbReference>
<dbReference type="Pfam" id="PF05695">
    <property type="entry name" value="Ycf2"/>
    <property type="match status" value="1"/>
</dbReference>
<dbReference type="SMART" id="SM00382">
    <property type="entry name" value="AAA"/>
    <property type="match status" value="1"/>
</dbReference>
<dbReference type="SUPFAM" id="SSF52540">
    <property type="entry name" value="P-loop containing nucleoside triphosphate hydrolases"/>
    <property type="match status" value="1"/>
</dbReference>
<accession>Q33BV3</accession>
<name>YCF2_NICTO</name>
<reference key="1">
    <citation type="journal article" date="2006" name="Mol. Genet. Genomics">
        <title>The chloroplast genome of Nicotiana sylvestris and Nicotiana tomentosiformis: complete sequencing confirms that the Nicotiana sylvestris progenitor is the maternal genome donor of Nicotiana tabacum.</title>
        <authorList>
            <person name="Yukawa M."/>
            <person name="Tsudzuki T."/>
            <person name="Sugiura M."/>
        </authorList>
    </citation>
    <scope>NUCLEOTIDE SEQUENCE [LARGE SCALE GENOMIC DNA]</scope>
</reference>
<sequence>MRGHQFKSWIFELREILREIKNSHHFLDSWTQFNSVGSFIHIFFHQERFLKLFDPRIWSILLSRNSQGSTSNRYFTIKGVILFVVAVLIYRINNRNMVERKNLYLIGLLPIPMNSIGPRNDTLEESVGSSNINRLIVSLLYLPKGKKISESCFLNPKESTWVLPITKKCSMPESNWGSRWWRNWIGKKRDSSCKISNETVAGIEILFKEKDLKYLEFLFVYYMDDPIRKDHDWELFDRLSLRKSRNRINLNSGPLFEILVKHWISYLMSAFREKIPIEVEGFFKQQGAGSTIQSNDIEHVSHLFSRNKWAISLQNCAQFHMWQFRQDLFVSWGKNPPESDFLRNVSRENWIWLDNVWLVNKDRFFSKVQNVSSNIQYDSTRSSFVQVTDSSQLKGSSDQSRDHLDSISNEDSEYHTLINQREIQQRKERSILWDPSFLQTERKEIESGRFPKCLSGYSSMSRLFTEREKQMINHLFPEEIEEFLGNPTRSVRSFFSDRWSELHLGSNPTERSTRDQKLLKKQQDLSFVPSRRSENKEMVNIFKIITYLQNTVSIHPISSDPGCDMVPKDEPDMDSSNKISFLNKNPFFDLFHLFHDRNRGGYTLHYDFESEERFQEMADLFTLSITEPDLVYHKGFAFSIDSCGLDQKQFLNEARDESKKKSLLVLPPIFYEENESFSRRIRKKWVRISCGNDLEDPKPKIVVFASNNIMEAVTQYRLIRNLIQIQYSTYGYIRNVLNRFFLMNRSDRNFEYGIQRDQIGKDTLNHRTIMKYTINQYLSNLKKSQKKWFEPLILISRTERSMNRDPDAYRYKWSNGSKNFQEHLEQSVSEQKSRFQVVFDRLRINQYSIDWSEVIDKKDLSKPLRFFLSKSLLFLSKLLFFLSNSLPFFCVSFGNIPIHRSEIYIYELKGPNDQLCNQLLESIGLQIVHLKKWKPFLLDDHDTSQKSKFLINGGTISPFLFNKIPKWMIDSFHTRNNRRKSFDNPDSYFSMIFHDQDNWLNPVKPFHRSSLISSFYKANRLRFLNNPHHFCFYWNTRFPFSVEKPRINNSDFTYGQFLNILFIRNKIFSLCVGKKKHAFWGRDTISPIESQVSNIFIPNDFPQSGDETYNLYKSFHFPSRSDPFVRRAIYSIADISGTPLTEGQIVNFERTYCQPLSDMNLSDSEGKNLHQYLNFNSNMGLIHTPCSEKDLSSEKRKKRSLCLKKCVEKGQMYRTFQRDSAFSTLSKWNLFQTYMPWFLTSTGYKYLNFIFLDTFSDLLPILSSSQKFVSIFHDIMHGSGISWRILQKKLCLPQWNLISEISSKCLHNLLLSEEMIHRNNESSLISTHLRSPNAREFLYSILFLLLVAGYLVRTHLLFVSRASSELQTEFEKVKSLMIPSSMIELRKLLDRYPTSEPNSFWLKNLFLVALEQLGDSLEEIRGSASGGNMLGPAYGVKSIRSKKKDWNINLIEIIDLIPNPINRITFSRNTRHLSHTSKEIYSLIRKRKNVNGDWIDDKIESWVANSDSIDDEEREFLVQFSTLTTENRIDQILLSLTHSDRLSKNDSGYQMIEQPGAIYLRYLVDIHKKHLMNYEFNPSCLAERRIFLAHYQTITYSQTSCGENSFHFPSHGKPFSLRLALSPSRGILVIGSIGTGRSYLVKYLATNSYVPFITVFLNKFLDNKPKGFLLDEIDIDDSDDIDDSANLDASDDIDRDLDTELELLTRMNGLTMDMMPEIDRFYITLQFELAKAMSPCIIWIPNIHDLDVNESNDLALGLLVNHLSRDCERCSTRNILVIASTHIPQKVDPALIAPNKLNTCIKIRRLLLPQQRKHFFTLSYTRGFHLEKKMFHTNGFGSITMGSNARDLVALTNEVLSISITQKKSIIDTNTIRSALHRQTWDLRSQVRSVQDHGILFYQIGRAVAQNVLLSNCPIDPISIYMKKKSCNEGDSYLYKWYFELGTSMKRLTILLYLLSCSAGSVAQDLWSLSGPDEKNGITSYGLVENDSDLVHGLLEVEGALVGSSRTEKDCSQFDNDRVTLLLRPEPRNPLDMMQNGSCSILDQRFLYEKYESEFEEGEGEGALDPQEDLFNHIVWAPRIWRPWGFLFDCIERPNELGFPYWSRSFRGKRIIYDEEDELQENDSEFLQSGTMQYQTRDRSSKEQGLFRISQFIWDPADPLFFLFKDQPPGSVFSHRELFADEEMSKGLLTSQTDPPTSIYKRWFIKNTQEKHFELLINRQRWLRTNSSLSNGSFRSNTLSESYQYLSNLFLSNGTLLDQMTKTLLRKRWLFPDEMKIGFM</sequence>
<feature type="chain" id="PRO_0000242535" description="Protein Ycf2">
    <location>
        <begin position="1"/>
        <end position="2280"/>
    </location>
</feature>
<feature type="binding site" evidence="1">
    <location>
        <begin position="1631"/>
        <end position="1638"/>
    </location>
    <ligand>
        <name>ATP</name>
        <dbReference type="ChEBI" id="CHEBI:30616"/>
    </ligand>
</feature>
<protein>
    <recommendedName>
        <fullName evidence="1">Protein Ycf2</fullName>
    </recommendedName>
</protein>
<evidence type="ECO:0000255" key="1">
    <source>
        <dbReference type="HAMAP-Rule" id="MF_01330"/>
    </source>
</evidence>
<organism>
    <name type="scientific">Nicotiana tomentosiformis</name>
    <name type="common">Tobacco</name>
    <dbReference type="NCBI Taxonomy" id="4098"/>
    <lineage>
        <taxon>Eukaryota</taxon>
        <taxon>Viridiplantae</taxon>
        <taxon>Streptophyta</taxon>
        <taxon>Embryophyta</taxon>
        <taxon>Tracheophyta</taxon>
        <taxon>Spermatophyta</taxon>
        <taxon>Magnoliopsida</taxon>
        <taxon>eudicotyledons</taxon>
        <taxon>Gunneridae</taxon>
        <taxon>Pentapetalae</taxon>
        <taxon>asterids</taxon>
        <taxon>lamiids</taxon>
        <taxon>Solanales</taxon>
        <taxon>Solanaceae</taxon>
        <taxon>Nicotianoideae</taxon>
        <taxon>Nicotianeae</taxon>
        <taxon>Nicotiana</taxon>
    </lineage>
</organism>
<comment type="function">
    <text>Probable ATPase of unknown function. Its presence in a non-photosynthetic plant (Epifagus virginiana) and experiments in tobacco indicate that it has an essential function which is probably not related to photosynthesis.</text>
</comment>
<comment type="subcellular location">
    <subcellularLocation>
        <location evidence="1">Plastid</location>
        <location evidence="1">Chloroplast stroma</location>
    </subcellularLocation>
</comment>
<comment type="similarity">
    <text evidence="1">Belongs to the Ycf2 family.</text>
</comment>
<keyword id="KW-0067">ATP-binding</keyword>
<keyword id="KW-0150">Chloroplast</keyword>
<keyword id="KW-0547">Nucleotide-binding</keyword>
<keyword id="KW-0934">Plastid</keyword>
<gene>
    <name evidence="1" type="primary">ycf2-A</name>
</gene>
<gene>
    <name evidence="1" type="primary">ycf2-B</name>
</gene>
<proteinExistence type="inferred from homology"/>